<comment type="function">
    <text evidence="1">Exopeptidase which selectively removes arginine and/or lysine residues from the N-terminus of several peptide substrates including Arg(0)-Leu-enkephalin, Arg(0)-Met-enkephalin and Arg(-1)-Lys(0)-somatostatin-14. Can hydrolyze leukotriene A4 (LTA-4) into leukotriene B4 (LTB-4) (By similarity).</text>
</comment>
<comment type="catalytic activity">
    <reaction>
        <text>Release of N-terminal Arg and Lys from oligopeptides when P1' is not Pro. Also acts on arylamides of Arg and Lys.</text>
        <dbReference type="EC" id="3.4.11.6"/>
    </reaction>
</comment>
<comment type="cofactor">
    <cofactor evidence="1">
        <name>Zn(2+)</name>
        <dbReference type="ChEBI" id="CHEBI:29105"/>
    </cofactor>
    <text evidence="1">Binds 1 zinc ion per subunit.</text>
</comment>
<comment type="subcellular location">
    <subcellularLocation>
        <location evidence="1">Secreted</location>
    </subcellularLocation>
</comment>
<comment type="similarity">
    <text evidence="3">Belongs to the peptidase M1 family.</text>
</comment>
<proteinExistence type="evidence at protein level"/>
<reference key="1">
    <citation type="submission" date="1999-05" db="EMBL/GenBank/DDBJ databases">
        <title>Human aminopeptidase B on chromosome 1q32.2: cDNA, genomic structure and expression.</title>
        <authorList>
            <person name="Piesse C."/>
            <person name="Tymms M."/>
            <person name="Garrafa E."/>
            <person name="Gouzy C."/>
            <person name="Lacasa M."/>
            <person name="Cadel S."/>
            <person name="Foulon T."/>
            <person name="Cohen P."/>
        </authorList>
    </citation>
    <scope>NUCLEOTIDE SEQUENCE [MRNA]</scope>
</reference>
<reference key="2">
    <citation type="submission" date="2000-10" db="EMBL/GenBank/DDBJ databases">
        <title>Human aminopeptidase B cDNA cloning.</title>
        <authorList>
            <person name="Kristensen T."/>
        </authorList>
    </citation>
    <scope>NUCLEOTIDE SEQUENCE [MRNA]</scope>
    <source>
        <tissue>Placenta</tissue>
    </source>
</reference>
<reference key="3">
    <citation type="journal article" date="2004" name="Genome Res.">
        <title>The status, quality, and expansion of the NIH full-length cDNA project: the Mammalian Gene Collection (MGC).</title>
        <authorList>
            <consortium name="The MGC Project Team"/>
        </authorList>
    </citation>
    <scope>NUCLEOTIDE SEQUENCE [LARGE SCALE MRNA]</scope>
    <source>
        <tissue>Lung</tissue>
    </source>
</reference>
<reference key="4">
    <citation type="journal article" date="2007" name="BMC Genomics">
        <title>The full-ORF clone resource of the German cDNA consortium.</title>
        <authorList>
            <person name="Bechtel S."/>
            <person name="Rosenfelder H."/>
            <person name="Duda A."/>
            <person name="Schmidt C.P."/>
            <person name="Ernst U."/>
            <person name="Wellenreuther R."/>
            <person name="Mehrle A."/>
            <person name="Schuster C."/>
            <person name="Bahr A."/>
            <person name="Bloecker H."/>
            <person name="Heubner D."/>
            <person name="Hoerlein A."/>
            <person name="Michel G."/>
            <person name="Wedler H."/>
            <person name="Koehrer K."/>
            <person name="Ottenwaelder B."/>
            <person name="Poustka A."/>
            <person name="Wiemann S."/>
            <person name="Schupp I."/>
        </authorList>
    </citation>
    <scope>NUCLEOTIDE SEQUENCE [LARGE SCALE MRNA] OF 291-650</scope>
    <source>
        <tissue>Brain</tissue>
    </source>
</reference>
<reference key="5">
    <citation type="journal article" date="2006" name="Cell">
        <title>Global, in vivo, and site-specific phosphorylation dynamics in signaling networks.</title>
        <authorList>
            <person name="Olsen J.V."/>
            <person name="Blagoev B."/>
            <person name="Gnad F."/>
            <person name="Macek B."/>
            <person name="Kumar C."/>
            <person name="Mortensen P."/>
            <person name="Mann M."/>
        </authorList>
    </citation>
    <scope>IDENTIFICATION BY MASS SPECTROMETRY [LARGE SCALE ANALYSIS]</scope>
    <source>
        <tissue>Cervix carcinoma</tissue>
    </source>
</reference>
<reference key="6">
    <citation type="journal article" date="2009" name="Science">
        <title>Lysine acetylation targets protein complexes and co-regulates major cellular functions.</title>
        <authorList>
            <person name="Choudhary C."/>
            <person name="Kumar C."/>
            <person name="Gnad F."/>
            <person name="Nielsen M.L."/>
            <person name="Rehman M."/>
            <person name="Walther T.C."/>
            <person name="Olsen J.V."/>
            <person name="Mann M."/>
        </authorList>
    </citation>
    <scope>ACETYLATION [LARGE SCALE ANALYSIS] AT LYS-446</scope>
    <scope>IDENTIFICATION BY MASS SPECTROMETRY [LARGE SCALE ANALYSIS]</scope>
</reference>
<reference key="7">
    <citation type="journal article" date="2010" name="Sci. Signal.">
        <title>Quantitative phosphoproteomics reveals widespread full phosphorylation site occupancy during mitosis.</title>
        <authorList>
            <person name="Olsen J.V."/>
            <person name="Vermeulen M."/>
            <person name="Santamaria A."/>
            <person name="Kumar C."/>
            <person name="Miller M.L."/>
            <person name="Jensen L.J."/>
            <person name="Gnad F."/>
            <person name="Cox J."/>
            <person name="Jensen T.S."/>
            <person name="Nigg E.A."/>
            <person name="Brunak S."/>
            <person name="Mann M."/>
        </authorList>
    </citation>
    <scope>ACETYLATION [LARGE SCALE ANALYSIS] AT ALA-2</scope>
    <scope>PHOSPHORYLATION [LARGE SCALE ANALYSIS] AT SER-7</scope>
    <scope>CLEAVAGE OF INITIATOR METHIONINE [LARGE SCALE ANALYSIS]</scope>
    <scope>IDENTIFICATION BY MASS SPECTROMETRY [LARGE SCALE ANALYSIS]</scope>
    <source>
        <tissue>Cervix carcinoma</tissue>
    </source>
</reference>
<reference key="8">
    <citation type="journal article" date="2011" name="BMC Syst. Biol.">
        <title>Initial characterization of the human central proteome.</title>
        <authorList>
            <person name="Burkard T.R."/>
            <person name="Planyavsky M."/>
            <person name="Kaupe I."/>
            <person name="Breitwieser F.P."/>
            <person name="Buerckstuemmer T."/>
            <person name="Bennett K.L."/>
            <person name="Superti-Furga G."/>
            <person name="Colinge J."/>
        </authorList>
    </citation>
    <scope>IDENTIFICATION BY MASS SPECTROMETRY [LARGE SCALE ANALYSIS]</scope>
</reference>
<reference key="9">
    <citation type="journal article" date="2011" name="Sci. Signal.">
        <title>System-wide temporal characterization of the proteome and phosphoproteome of human embryonic stem cell differentiation.</title>
        <authorList>
            <person name="Rigbolt K.T."/>
            <person name="Prokhorova T.A."/>
            <person name="Akimov V."/>
            <person name="Henningsen J."/>
            <person name="Johansen P.T."/>
            <person name="Kratchmarova I."/>
            <person name="Kassem M."/>
            <person name="Mann M."/>
            <person name="Olsen J.V."/>
            <person name="Blagoev B."/>
        </authorList>
    </citation>
    <scope>ACETYLATION [LARGE SCALE ANALYSIS] AT ALA-2</scope>
    <scope>PHOSPHORYLATION [LARGE SCALE ANALYSIS] AT SER-7</scope>
    <scope>CLEAVAGE OF INITIATOR METHIONINE [LARGE SCALE ANALYSIS]</scope>
    <scope>IDENTIFICATION BY MASS SPECTROMETRY [LARGE SCALE ANALYSIS]</scope>
</reference>
<reference key="10">
    <citation type="journal article" date="2013" name="J. Proteome Res.">
        <title>Toward a comprehensive characterization of a human cancer cell phosphoproteome.</title>
        <authorList>
            <person name="Zhou H."/>
            <person name="Di Palma S."/>
            <person name="Preisinger C."/>
            <person name="Peng M."/>
            <person name="Polat A.N."/>
            <person name="Heck A.J."/>
            <person name="Mohammed S."/>
        </authorList>
    </citation>
    <scope>PHOSPHORYLATION [LARGE SCALE ANALYSIS] AT SER-7</scope>
    <scope>IDENTIFICATION BY MASS SPECTROMETRY [LARGE SCALE ANALYSIS]</scope>
    <source>
        <tissue>Cervix carcinoma</tissue>
        <tissue>Erythroleukemia</tissue>
    </source>
</reference>
<reference key="11">
    <citation type="journal article" date="2014" name="J. Proteomics">
        <title>An enzyme assisted RP-RPLC approach for in-depth analysis of human liver phosphoproteome.</title>
        <authorList>
            <person name="Bian Y."/>
            <person name="Song C."/>
            <person name="Cheng K."/>
            <person name="Dong M."/>
            <person name="Wang F."/>
            <person name="Huang J."/>
            <person name="Sun D."/>
            <person name="Wang L."/>
            <person name="Ye M."/>
            <person name="Zou H."/>
        </authorList>
    </citation>
    <scope>IDENTIFICATION BY MASS SPECTROMETRY [LARGE SCALE ANALYSIS]</scope>
    <source>
        <tissue>Liver</tissue>
    </source>
</reference>
<organism>
    <name type="scientific">Homo sapiens</name>
    <name type="common">Human</name>
    <dbReference type="NCBI Taxonomy" id="9606"/>
    <lineage>
        <taxon>Eukaryota</taxon>
        <taxon>Metazoa</taxon>
        <taxon>Chordata</taxon>
        <taxon>Craniata</taxon>
        <taxon>Vertebrata</taxon>
        <taxon>Euteleostomi</taxon>
        <taxon>Mammalia</taxon>
        <taxon>Eutheria</taxon>
        <taxon>Euarchontoglires</taxon>
        <taxon>Primates</taxon>
        <taxon>Haplorrhini</taxon>
        <taxon>Catarrhini</taxon>
        <taxon>Hominidae</taxon>
        <taxon>Homo</taxon>
    </lineage>
</organism>
<evidence type="ECO:0000250" key="1"/>
<evidence type="ECO:0000255" key="2">
    <source>
        <dbReference type="PROSITE-ProRule" id="PRU10095"/>
    </source>
</evidence>
<evidence type="ECO:0000305" key="3"/>
<evidence type="ECO:0007744" key="4">
    <source>
    </source>
</evidence>
<evidence type="ECO:0007744" key="5">
    <source>
    </source>
</evidence>
<evidence type="ECO:0007744" key="6">
    <source>
    </source>
</evidence>
<evidence type="ECO:0007744" key="7">
    <source>
    </source>
</evidence>
<gene>
    <name type="primary">RNPEP</name>
    <name type="synonym">APB</name>
</gene>
<keyword id="KW-0007">Acetylation</keyword>
<keyword id="KW-0031">Aminopeptidase</keyword>
<keyword id="KW-0378">Hydrolase</keyword>
<keyword id="KW-0479">Metal-binding</keyword>
<keyword id="KW-0482">Metalloprotease</keyword>
<keyword id="KW-0597">Phosphoprotein</keyword>
<keyword id="KW-0645">Protease</keyword>
<keyword id="KW-1267">Proteomics identification</keyword>
<keyword id="KW-1185">Reference proteome</keyword>
<keyword id="KW-0964">Secreted</keyword>
<keyword id="KW-0862">Zinc</keyword>
<accession>Q9H4A4</accession>
<accession>Q9BVM9</accession>
<accession>Q9H1D4</accession>
<accession>Q9NPT7</accession>
<protein>
    <recommendedName>
        <fullName>Aminopeptidase B</fullName>
        <shortName>AP-B</shortName>
        <ecNumber>3.4.11.6</ecNumber>
    </recommendedName>
    <alternativeName>
        <fullName>Arginine aminopeptidase</fullName>
    </alternativeName>
    <alternativeName>
        <fullName>Arginyl aminopeptidase</fullName>
    </alternativeName>
</protein>
<dbReference type="EC" id="3.4.11.6"/>
<dbReference type="EMBL" id="AJ242586">
    <property type="protein sequence ID" value="CAC12957.1"/>
    <property type="molecule type" value="mRNA"/>
</dbReference>
<dbReference type="EMBL" id="AJ296161">
    <property type="protein sequence ID" value="CAC14047.1"/>
    <property type="molecule type" value="mRNA"/>
</dbReference>
<dbReference type="EMBL" id="BC001064">
    <property type="protein sequence ID" value="AAH01064.1"/>
    <property type="molecule type" value="mRNA"/>
</dbReference>
<dbReference type="EMBL" id="BC012166">
    <property type="protein sequence ID" value="AAH12166.1"/>
    <property type="molecule type" value="mRNA"/>
</dbReference>
<dbReference type="EMBL" id="AL390139">
    <property type="protein sequence ID" value="CAB99087.1"/>
    <property type="molecule type" value="mRNA"/>
</dbReference>
<dbReference type="CCDS" id="CCDS1418.1"/>
<dbReference type="PIR" id="T51870">
    <property type="entry name" value="T51870"/>
</dbReference>
<dbReference type="RefSeq" id="NP_001306111.1">
    <property type="nucleotide sequence ID" value="NM_001319182.1"/>
</dbReference>
<dbReference type="RefSeq" id="NP_001306112.1">
    <property type="nucleotide sequence ID" value="NM_001319183.1"/>
</dbReference>
<dbReference type="RefSeq" id="NP_001306113.1">
    <property type="nucleotide sequence ID" value="NM_001319184.1"/>
</dbReference>
<dbReference type="RefSeq" id="NP_064601.3">
    <property type="nucleotide sequence ID" value="NM_020216.3"/>
</dbReference>
<dbReference type="RefSeq" id="XP_005245478.1">
    <property type="nucleotide sequence ID" value="XM_005245421.1"/>
</dbReference>
<dbReference type="RefSeq" id="XP_016857511.1">
    <property type="nucleotide sequence ID" value="XM_017002022.1"/>
</dbReference>
<dbReference type="SMR" id="Q9H4A4"/>
<dbReference type="BioGRID" id="111978">
    <property type="interactions" value="53"/>
</dbReference>
<dbReference type="FunCoup" id="Q9H4A4">
    <property type="interactions" value="315"/>
</dbReference>
<dbReference type="IntAct" id="Q9H4A4">
    <property type="interactions" value="13"/>
</dbReference>
<dbReference type="MINT" id="Q9H4A4"/>
<dbReference type="STRING" id="9606.ENSP00000295640"/>
<dbReference type="BindingDB" id="Q9H4A4"/>
<dbReference type="ChEMBL" id="CHEMBL2432"/>
<dbReference type="MEROPS" id="M01.014"/>
<dbReference type="GlyCosmos" id="Q9H4A4">
    <property type="glycosylation" value="2 sites, 1 glycan"/>
</dbReference>
<dbReference type="GlyGen" id="Q9H4A4">
    <property type="glycosylation" value="2 sites, 1 O-linked glycan (2 sites)"/>
</dbReference>
<dbReference type="iPTMnet" id="Q9H4A4"/>
<dbReference type="MetOSite" id="Q9H4A4"/>
<dbReference type="PhosphoSitePlus" id="Q9H4A4"/>
<dbReference type="SwissPalm" id="Q9H4A4"/>
<dbReference type="BioMuta" id="RNPEP"/>
<dbReference type="DMDM" id="20137480"/>
<dbReference type="jPOST" id="Q9H4A4"/>
<dbReference type="MassIVE" id="Q9H4A4"/>
<dbReference type="PaxDb" id="9606-ENSP00000295640"/>
<dbReference type="PeptideAtlas" id="Q9H4A4"/>
<dbReference type="ProteomicsDB" id="80809"/>
<dbReference type="Pumba" id="Q9H4A4"/>
<dbReference type="TopDownProteomics" id="Q9H4A4"/>
<dbReference type="Antibodypedia" id="34521">
    <property type="antibodies" value="214 antibodies from 25 providers"/>
</dbReference>
<dbReference type="DNASU" id="6051"/>
<dbReference type="Ensembl" id="ENST00000295640.9">
    <property type="protein sequence ID" value="ENSP00000295640.4"/>
    <property type="gene ID" value="ENSG00000176393.11"/>
</dbReference>
<dbReference type="GeneID" id="6051"/>
<dbReference type="KEGG" id="hsa:6051"/>
<dbReference type="MANE-Select" id="ENST00000295640.9">
    <property type="protein sequence ID" value="ENSP00000295640.4"/>
    <property type="RefSeq nucleotide sequence ID" value="NM_020216.4"/>
    <property type="RefSeq protein sequence ID" value="NP_064601.3"/>
</dbReference>
<dbReference type="UCSC" id="uc001gxd.4">
    <property type="organism name" value="human"/>
</dbReference>
<dbReference type="AGR" id="HGNC:10078"/>
<dbReference type="CTD" id="6051"/>
<dbReference type="DisGeNET" id="6051"/>
<dbReference type="GeneCards" id="RNPEP"/>
<dbReference type="HGNC" id="HGNC:10078">
    <property type="gene designation" value="RNPEP"/>
</dbReference>
<dbReference type="HPA" id="ENSG00000176393">
    <property type="expression patterns" value="Low tissue specificity"/>
</dbReference>
<dbReference type="MIM" id="602675">
    <property type="type" value="gene"/>
</dbReference>
<dbReference type="neXtProt" id="NX_Q9H4A4"/>
<dbReference type="OpenTargets" id="ENSG00000176393"/>
<dbReference type="PharmGKB" id="PA34451"/>
<dbReference type="VEuPathDB" id="HostDB:ENSG00000176393"/>
<dbReference type="eggNOG" id="KOG1047">
    <property type="taxonomic scope" value="Eukaryota"/>
</dbReference>
<dbReference type="GeneTree" id="ENSGT00940000160431"/>
<dbReference type="HOGENOM" id="CLU_014505_2_1_1"/>
<dbReference type="InParanoid" id="Q9H4A4"/>
<dbReference type="OMA" id="QLMDLDD"/>
<dbReference type="OrthoDB" id="79562at2759"/>
<dbReference type="PAN-GO" id="Q9H4A4">
    <property type="GO annotations" value="3 GO annotations based on evolutionary models"/>
</dbReference>
<dbReference type="PhylomeDB" id="Q9H4A4"/>
<dbReference type="TreeFam" id="TF300758"/>
<dbReference type="BRENDA" id="3.4.11.6">
    <property type="organism ID" value="2681"/>
</dbReference>
<dbReference type="PathwayCommons" id="Q9H4A4"/>
<dbReference type="SignaLink" id="Q9H4A4"/>
<dbReference type="BioGRID-ORCS" id="6051">
    <property type="hits" value="12 hits in 1167 CRISPR screens"/>
</dbReference>
<dbReference type="CD-CODE" id="91857CE7">
    <property type="entry name" value="Nucleolus"/>
</dbReference>
<dbReference type="ChiTaRS" id="RNPEP">
    <property type="organism name" value="human"/>
</dbReference>
<dbReference type="GeneWiki" id="RNPEP"/>
<dbReference type="GenomeRNAi" id="6051"/>
<dbReference type="Pharos" id="Q9H4A4">
    <property type="development level" value="Tchem"/>
</dbReference>
<dbReference type="PRO" id="PR:Q9H4A4"/>
<dbReference type="Proteomes" id="UP000005640">
    <property type="component" value="Chromosome 1"/>
</dbReference>
<dbReference type="RNAct" id="Q9H4A4">
    <property type="molecule type" value="protein"/>
</dbReference>
<dbReference type="Bgee" id="ENSG00000176393">
    <property type="expression patterns" value="Expressed in mucosa of transverse colon and 97 other cell types or tissues"/>
</dbReference>
<dbReference type="ExpressionAtlas" id="Q9H4A4">
    <property type="expression patterns" value="baseline and differential"/>
</dbReference>
<dbReference type="GO" id="GO:0070062">
    <property type="term" value="C:extracellular exosome"/>
    <property type="evidence" value="ECO:0007005"/>
    <property type="project" value="UniProtKB"/>
</dbReference>
<dbReference type="GO" id="GO:0005576">
    <property type="term" value="C:extracellular region"/>
    <property type="evidence" value="ECO:0007005"/>
    <property type="project" value="BHF-UCL"/>
</dbReference>
<dbReference type="GO" id="GO:0005615">
    <property type="term" value="C:extracellular space"/>
    <property type="evidence" value="ECO:0000318"/>
    <property type="project" value="GO_Central"/>
</dbReference>
<dbReference type="GO" id="GO:0005886">
    <property type="term" value="C:plasma membrane"/>
    <property type="evidence" value="ECO:0000250"/>
    <property type="project" value="UniProtKB"/>
</dbReference>
<dbReference type="GO" id="GO:0004177">
    <property type="term" value="F:aminopeptidase activity"/>
    <property type="evidence" value="ECO:0000250"/>
    <property type="project" value="UniProtKB"/>
</dbReference>
<dbReference type="GO" id="GO:0004301">
    <property type="term" value="F:epoxide hydrolase activity"/>
    <property type="evidence" value="ECO:0000303"/>
    <property type="project" value="UniProtKB"/>
</dbReference>
<dbReference type="GO" id="GO:0070006">
    <property type="term" value="F:metalloaminopeptidase activity"/>
    <property type="evidence" value="ECO:0000318"/>
    <property type="project" value="GO_Central"/>
</dbReference>
<dbReference type="GO" id="GO:0008235">
    <property type="term" value="F:metalloexopeptidase activity"/>
    <property type="evidence" value="ECO:0000303"/>
    <property type="project" value="UniProtKB"/>
</dbReference>
<dbReference type="GO" id="GO:0008270">
    <property type="term" value="F:zinc ion binding"/>
    <property type="evidence" value="ECO:0000303"/>
    <property type="project" value="UniProtKB"/>
</dbReference>
<dbReference type="GO" id="GO:0006508">
    <property type="term" value="P:proteolysis"/>
    <property type="evidence" value="ECO:0000318"/>
    <property type="project" value="GO_Central"/>
</dbReference>
<dbReference type="CDD" id="cd09599">
    <property type="entry name" value="M1_LTA4H"/>
    <property type="match status" value="1"/>
</dbReference>
<dbReference type="FunFam" id="2.60.40.1730:FF:000011">
    <property type="entry name" value="Arginyl aminopeptidase"/>
    <property type="match status" value="1"/>
</dbReference>
<dbReference type="FunFam" id="1.10.390.10:FF:000003">
    <property type="entry name" value="Leukotriene A(4) hydrolase"/>
    <property type="match status" value="1"/>
</dbReference>
<dbReference type="FunFam" id="1.25.40.320:FF:000001">
    <property type="entry name" value="Leukotriene A(4) hydrolase"/>
    <property type="match status" value="1"/>
</dbReference>
<dbReference type="FunFam" id="3.30.2010.30:FF:000001">
    <property type="entry name" value="Leukotriene A(4) hydrolase"/>
    <property type="match status" value="1"/>
</dbReference>
<dbReference type="Gene3D" id="3.30.2010.30">
    <property type="match status" value="1"/>
</dbReference>
<dbReference type="Gene3D" id="1.10.390.10">
    <property type="entry name" value="Neutral Protease Domain 2"/>
    <property type="match status" value="1"/>
</dbReference>
<dbReference type="Gene3D" id="1.25.40.320">
    <property type="entry name" value="Peptidase M1, leukotriene A4 hydrolase/aminopeptidase C-terminal domain"/>
    <property type="match status" value="1"/>
</dbReference>
<dbReference type="Gene3D" id="2.60.40.1730">
    <property type="entry name" value="tricorn interacting facor f3 domain"/>
    <property type="match status" value="1"/>
</dbReference>
<dbReference type="InterPro" id="IPR045357">
    <property type="entry name" value="Aminopeptidase_N-like_N"/>
</dbReference>
<dbReference type="InterPro" id="IPR042097">
    <property type="entry name" value="Aminopeptidase_N-like_N_sf"/>
</dbReference>
<dbReference type="InterPro" id="IPR016024">
    <property type="entry name" value="ARM-type_fold"/>
</dbReference>
<dbReference type="InterPro" id="IPR049980">
    <property type="entry name" value="LTA4H_cat"/>
</dbReference>
<dbReference type="InterPro" id="IPR038502">
    <property type="entry name" value="M1_LTA-4_hydro/amino_C_sf"/>
</dbReference>
<dbReference type="InterPro" id="IPR034015">
    <property type="entry name" value="M1_LTA4H"/>
</dbReference>
<dbReference type="InterPro" id="IPR001930">
    <property type="entry name" value="Peptidase_M1"/>
</dbReference>
<dbReference type="InterPro" id="IPR015211">
    <property type="entry name" value="Peptidase_M1_C"/>
</dbReference>
<dbReference type="InterPro" id="IPR014782">
    <property type="entry name" value="Peptidase_M1_dom"/>
</dbReference>
<dbReference type="InterPro" id="IPR027268">
    <property type="entry name" value="Peptidase_M4/M1_CTD_sf"/>
</dbReference>
<dbReference type="PANTHER" id="PTHR45726:SF1">
    <property type="entry name" value="AMINOPEPTIDASE B"/>
    <property type="match status" value="1"/>
</dbReference>
<dbReference type="PANTHER" id="PTHR45726">
    <property type="entry name" value="LEUKOTRIENE A-4 HYDROLASE"/>
    <property type="match status" value="1"/>
</dbReference>
<dbReference type="Pfam" id="PF09127">
    <property type="entry name" value="Leuk-A4-hydro_C"/>
    <property type="match status" value="1"/>
</dbReference>
<dbReference type="Pfam" id="PF01433">
    <property type="entry name" value="Peptidase_M1"/>
    <property type="match status" value="1"/>
</dbReference>
<dbReference type="Pfam" id="PF17900">
    <property type="entry name" value="Peptidase_M1_N"/>
    <property type="match status" value="1"/>
</dbReference>
<dbReference type="PRINTS" id="PR00756">
    <property type="entry name" value="ALADIPTASE"/>
</dbReference>
<dbReference type="SMART" id="SM01263">
    <property type="entry name" value="Leuk-A4-hydro_C"/>
    <property type="match status" value="1"/>
</dbReference>
<dbReference type="SUPFAM" id="SSF48371">
    <property type="entry name" value="ARM repeat"/>
    <property type="match status" value="1"/>
</dbReference>
<dbReference type="SUPFAM" id="SSF63737">
    <property type="entry name" value="Leukotriene A4 hydrolase N-terminal domain"/>
    <property type="match status" value="1"/>
</dbReference>
<dbReference type="SUPFAM" id="SSF55486">
    <property type="entry name" value="Metalloproteases ('zincins'), catalytic domain"/>
    <property type="match status" value="1"/>
</dbReference>
<dbReference type="PROSITE" id="PS00142">
    <property type="entry name" value="ZINC_PROTEASE"/>
    <property type="match status" value="1"/>
</dbReference>
<feature type="initiator methionine" description="Removed" evidence="5 6">
    <location>
        <position position="1"/>
    </location>
</feature>
<feature type="chain" id="PRO_0000095088" description="Aminopeptidase B">
    <location>
        <begin position="2"/>
        <end position="650"/>
    </location>
</feature>
<feature type="active site" description="Proton acceptor" evidence="2">
    <location>
        <position position="326"/>
    </location>
</feature>
<feature type="binding site" evidence="1">
    <location>
        <begin position="298"/>
        <end position="302"/>
    </location>
    <ligand>
        <name>substrate</name>
    </ligand>
</feature>
<feature type="binding site" evidence="2">
    <location>
        <position position="325"/>
    </location>
    <ligand>
        <name>Zn(2+)</name>
        <dbReference type="ChEBI" id="CHEBI:29105"/>
        <note>catalytic</note>
    </ligand>
</feature>
<feature type="binding site" evidence="2">
    <location>
        <position position="329"/>
    </location>
    <ligand>
        <name>Zn(2+)</name>
        <dbReference type="ChEBI" id="CHEBI:29105"/>
        <note>catalytic</note>
    </ligand>
</feature>
<feature type="binding site" evidence="2">
    <location>
        <position position="348"/>
    </location>
    <ligand>
        <name>Zn(2+)</name>
        <dbReference type="ChEBI" id="CHEBI:29105"/>
        <note>catalytic</note>
    </ligand>
</feature>
<feature type="site" description="Transition state stabilizer" evidence="1">
    <location>
        <position position="414"/>
    </location>
</feature>
<feature type="modified residue" description="N-acetylalanine" evidence="5 6">
    <location>
        <position position="2"/>
    </location>
</feature>
<feature type="modified residue" description="Phosphoserine" evidence="5 6 7">
    <location>
        <position position="7"/>
    </location>
</feature>
<feature type="modified residue" description="N6-acetyllysine" evidence="4">
    <location>
        <position position="446"/>
    </location>
</feature>
<feature type="sequence variant" id="VAR_051566" description="In dbSNP:rs3820439.">
    <original>V</original>
    <variation>I</variation>
    <location>
        <position position="579"/>
    </location>
</feature>
<feature type="sequence conflict" description="In Ref. 2; CAC14047." evidence="3" ref="2">
    <original>A</original>
    <variation>V</variation>
    <location>
        <position position="2"/>
    </location>
</feature>
<feature type="sequence conflict" description="In Ref. 1; CAC12957." evidence="3" ref="1">
    <original>GAAR</original>
    <variation>ARPGGRCTPRRL</variation>
    <location>
        <begin position="11"/>
        <end position="14"/>
    </location>
</feature>
<feature type="sequence conflict" description="In Ref. 1; CAC12957." evidence="3" ref="1">
    <original>G</original>
    <variation>R</variation>
    <location>
        <position position="149"/>
    </location>
</feature>
<feature type="sequence conflict" description="In Ref. 1; CAC12957." evidence="3" ref="1">
    <original>L</original>
    <variation>V</variation>
    <location>
        <position position="153"/>
    </location>
</feature>
<feature type="sequence conflict" description="In Ref. 1; CAC12957." evidence="3" ref="1">
    <original>STW</original>
    <variation>RPG</variation>
    <location>
        <begin position="208"/>
        <end position="210"/>
    </location>
</feature>
<feature type="sequence conflict" description="In Ref. 1; CAC12957." evidence="3" ref="1">
    <location>
        <position position="262"/>
    </location>
</feature>
<sequence>MASGEHSPGSGAARRPLHSAQAVDVASASNFRAFELLHLHLDLRAEFGPPGPGAGSRGLSGTAVLDLRCLEPEGAAELRLDSHPCLEVTAAALRRERPGSEEPPAEPVSFYTQPFSHYGQALCVSFPQPCRAAERLQVLLTYRVGEGPGVCWLAPEQTAGKKKPFVYTQGQAVLNRAFFPCFDTPAVKYKYSALIEVPDGFTAVMSASTWEKRGPNKFFFQMCQPIPSYLIALAIGDLVSAEVGPRSRVWAEPCLIDAAKEEYNGVIEEFLATGEKLFGPYVWGRYDLLFMPPSFPFGGMENPCLTFVTPCLLAGDRSLADVIIHEISHSWFGNLVTNANWGEFWLNEGFTMYAQRRISTILFGAAYTCLEAATGRALLRQHMDITGEENPLNKLRVKIEPGVDPDDTYNETPYEKGFCFVSYLAHLVGDQDQFDSFLKAYVHEFKFRSILADDFLDFYLEYFPELKKKRVDIIPGFEFDRWLNTPGWPPYLPDLSPGDSLMKPAEELAQLWAAEELDMKAIEAVAISPWKTYQLVYFLDKILQKSPLPPGNVKKLGDTYPSISNARNAELRLRWGQIVLKNDHQEDFWKVKEFLHNQGKQKYTLPLYHAMMGGSEVAQTLAKETFASTASQLHSNVVNYVQQIVAPKGS</sequence>
<name>AMPB_HUMAN</name>